<keyword id="KW-0067">ATP-binding</keyword>
<keyword id="KW-0418">Kinase</keyword>
<keyword id="KW-0547">Nucleotide-binding</keyword>
<keyword id="KW-0808">Transferase</keyword>
<feature type="chain" id="PRO_0000212002" description="Arginine kinase">
    <location>
        <begin position="1"/>
        <end position="358"/>
    </location>
</feature>
<feature type="domain" description="Phosphagen kinase N-terminal" evidence="2">
    <location>
        <begin position="6"/>
        <end position="88"/>
    </location>
</feature>
<feature type="domain" description="Phosphagen kinase C-terminal" evidence="3">
    <location>
        <begin position="116"/>
        <end position="353"/>
    </location>
</feature>
<feature type="binding site" evidence="1">
    <location>
        <begin position="61"/>
        <end position="65"/>
    </location>
    <ligand>
        <name>substrate</name>
    </ligand>
</feature>
<feature type="binding site" evidence="3">
    <location>
        <begin position="119"/>
        <end position="123"/>
    </location>
    <ligand>
        <name>ATP</name>
        <dbReference type="ChEBI" id="CHEBI:30616"/>
    </ligand>
</feature>
<feature type="binding site" evidence="3">
    <location>
        <position position="182"/>
    </location>
    <ligand>
        <name>ATP</name>
        <dbReference type="ChEBI" id="CHEBI:30616"/>
    </ligand>
</feature>
<feature type="binding site" evidence="1">
    <location>
        <position position="222"/>
    </location>
    <ligand>
        <name>substrate</name>
    </ligand>
</feature>
<feature type="binding site" evidence="3">
    <location>
        <position position="226"/>
    </location>
    <ligand>
        <name>ATP</name>
        <dbReference type="ChEBI" id="CHEBI:30616"/>
    </ligand>
</feature>
<feature type="binding site" evidence="1">
    <location>
        <position position="269"/>
    </location>
    <ligand>
        <name>substrate</name>
    </ligand>
</feature>
<feature type="binding site" evidence="3">
    <location>
        <begin position="278"/>
        <end position="282"/>
    </location>
    <ligand>
        <name>ATP</name>
        <dbReference type="ChEBI" id="CHEBI:30616"/>
    </ligand>
</feature>
<feature type="binding site" evidence="3">
    <location>
        <begin position="306"/>
        <end position="311"/>
    </location>
    <ligand>
        <name>ATP</name>
        <dbReference type="ChEBI" id="CHEBI:30616"/>
    </ligand>
</feature>
<feature type="binding site" evidence="1">
    <location>
        <position position="311"/>
    </location>
    <ligand>
        <name>substrate</name>
    </ligand>
</feature>
<name>KARG_HALMK</name>
<dbReference type="EC" id="2.7.3.3"/>
<dbReference type="EMBL" id="D26104">
    <property type="protein sequence ID" value="BAA05100.1"/>
    <property type="molecule type" value="mRNA"/>
</dbReference>
<dbReference type="PIR" id="S46407">
    <property type="entry name" value="S46407"/>
</dbReference>
<dbReference type="SMR" id="P51544"/>
<dbReference type="GO" id="GO:0005615">
    <property type="term" value="C:extracellular space"/>
    <property type="evidence" value="ECO:0007669"/>
    <property type="project" value="TreeGrafter"/>
</dbReference>
<dbReference type="GO" id="GO:0004054">
    <property type="term" value="F:arginine kinase activity"/>
    <property type="evidence" value="ECO:0007669"/>
    <property type="project" value="UniProtKB-EC"/>
</dbReference>
<dbReference type="GO" id="GO:0005524">
    <property type="term" value="F:ATP binding"/>
    <property type="evidence" value="ECO:0007669"/>
    <property type="project" value="UniProtKB-KW"/>
</dbReference>
<dbReference type="GO" id="GO:0004111">
    <property type="term" value="F:creatine kinase activity"/>
    <property type="evidence" value="ECO:0007669"/>
    <property type="project" value="InterPro"/>
</dbReference>
<dbReference type="GO" id="GO:0046314">
    <property type="term" value="P:phosphocreatine biosynthetic process"/>
    <property type="evidence" value="ECO:0007669"/>
    <property type="project" value="InterPro"/>
</dbReference>
<dbReference type="CDD" id="cd07932">
    <property type="entry name" value="arginine_kinase_like"/>
    <property type="match status" value="1"/>
</dbReference>
<dbReference type="FunFam" id="3.30.590.10:FF:000006">
    <property type="entry name" value="Arginine kinase 1"/>
    <property type="match status" value="1"/>
</dbReference>
<dbReference type="FunFam" id="1.10.135.10:FF:000003">
    <property type="entry name" value="Three-domain arginine kinase"/>
    <property type="match status" value="1"/>
</dbReference>
<dbReference type="Gene3D" id="1.10.135.10">
    <property type="entry name" value="ATP:guanido phosphotransferase, N-terminal domain"/>
    <property type="match status" value="1"/>
</dbReference>
<dbReference type="Gene3D" id="3.30.590.10">
    <property type="entry name" value="Glutamine synthetase/guanido kinase, catalytic domain"/>
    <property type="match status" value="1"/>
</dbReference>
<dbReference type="InterPro" id="IPR000749">
    <property type="entry name" value="ATP-guanido_PTrfase"/>
</dbReference>
<dbReference type="InterPro" id="IPR022415">
    <property type="entry name" value="ATP-guanido_PTrfase_AS"/>
</dbReference>
<dbReference type="InterPro" id="IPR022414">
    <property type="entry name" value="ATP-guanido_PTrfase_cat"/>
</dbReference>
<dbReference type="InterPro" id="IPR022413">
    <property type="entry name" value="ATP-guanido_PTrfase_N"/>
</dbReference>
<dbReference type="InterPro" id="IPR036802">
    <property type="entry name" value="ATP-guanido_PTrfase_N_sf"/>
</dbReference>
<dbReference type="InterPro" id="IPR014746">
    <property type="entry name" value="Gln_synth/guanido_kin_cat_dom"/>
</dbReference>
<dbReference type="PANTHER" id="PTHR11547:SF38">
    <property type="entry name" value="ARGININE KINASE 1-RELATED"/>
    <property type="match status" value="1"/>
</dbReference>
<dbReference type="PANTHER" id="PTHR11547">
    <property type="entry name" value="ARGININE OR CREATINE KINASE"/>
    <property type="match status" value="1"/>
</dbReference>
<dbReference type="Pfam" id="PF00217">
    <property type="entry name" value="ATP-gua_Ptrans"/>
    <property type="match status" value="1"/>
</dbReference>
<dbReference type="Pfam" id="PF02807">
    <property type="entry name" value="ATP-gua_PtransN"/>
    <property type="match status" value="1"/>
</dbReference>
<dbReference type="SUPFAM" id="SSF55931">
    <property type="entry name" value="Glutamine synthetase/guanido kinase"/>
    <property type="match status" value="1"/>
</dbReference>
<dbReference type="SUPFAM" id="SSF48034">
    <property type="entry name" value="Guanido kinase N-terminal domain"/>
    <property type="match status" value="1"/>
</dbReference>
<dbReference type="PROSITE" id="PS00112">
    <property type="entry name" value="PHOSPHAGEN_KINASE"/>
    <property type="match status" value="1"/>
</dbReference>
<dbReference type="PROSITE" id="PS51510">
    <property type="entry name" value="PHOSPHAGEN_KINASE_C"/>
    <property type="match status" value="1"/>
</dbReference>
<dbReference type="PROSITE" id="PS51509">
    <property type="entry name" value="PHOSPHAGEN_KINASE_N"/>
    <property type="match status" value="1"/>
</dbReference>
<evidence type="ECO:0000250" key="1"/>
<evidence type="ECO:0000255" key="2">
    <source>
        <dbReference type="PROSITE-ProRule" id="PRU00842"/>
    </source>
</evidence>
<evidence type="ECO:0000255" key="3">
    <source>
        <dbReference type="PROSITE-ProRule" id="PRU00843"/>
    </source>
</evidence>
<organism>
    <name type="scientific">Haliotis madaka</name>
    <name type="common">Giant abalone</name>
    <name type="synonym">Nordotis madaka</name>
    <dbReference type="NCBI Taxonomy" id="81897"/>
    <lineage>
        <taxon>Eukaryota</taxon>
        <taxon>Metazoa</taxon>
        <taxon>Spiralia</taxon>
        <taxon>Lophotrochozoa</taxon>
        <taxon>Mollusca</taxon>
        <taxon>Gastropoda</taxon>
        <taxon>Vetigastropoda</taxon>
        <taxon>Lepetellida</taxon>
        <taxon>Haliotoidea</taxon>
        <taxon>Haliotidae</taxon>
        <taxon>Haliotis</taxon>
    </lineage>
</organism>
<comment type="catalytic activity">
    <reaction>
        <text>L-arginine + ATP = N(omega)-phospho-L-arginine + ADP + H(+)</text>
        <dbReference type="Rhea" id="RHEA:22940"/>
        <dbReference type="ChEBI" id="CHEBI:15378"/>
        <dbReference type="ChEBI" id="CHEBI:30616"/>
        <dbReference type="ChEBI" id="CHEBI:32682"/>
        <dbReference type="ChEBI" id="CHEBI:58477"/>
        <dbReference type="ChEBI" id="CHEBI:456216"/>
        <dbReference type="EC" id="2.7.3.3"/>
    </reaction>
</comment>
<comment type="subunit">
    <text>Monomer.</text>
</comment>
<comment type="similarity">
    <text evidence="2 3">Belongs to the ATP:guanido phosphotransferase family.</text>
</comment>
<proteinExistence type="evidence at transcript level"/>
<protein>
    <recommendedName>
        <fullName>Arginine kinase</fullName>
        <shortName>AK</shortName>
        <ecNumber>2.7.3.3</ecNumber>
    </recommendedName>
</protein>
<sequence length="358" mass="39814">MLAMASVEELWAKLDGAADCKSLLKNNLTKERYEALKDKKTKFGGTLADCIRSGCLNLDSGVGIYACDPDAYTVFADVLDAVIKEYHKVPELKHPEPEMGDLDKLNFGDLDPSGEYIVSTRVRVGRSHDSYGFPPVLTKQERLKMEEDTKAAFEKFSGELAGKYFPLEGMSKEDQKQMTEDHFLFKDDDRFLRDAGGYNDWCSGRGIFFNTAKNFLVWVNEEDHLRLISMQKGGDLAAVYKRLVVAINTMTASGLSFAKRDGLGYLTFCPSNLGTALRASVHMKIPNLAASPEFKSFCDNLNIQARGIHGEHTESVGGVYDLSNKRRLGLTEYQAVEEMRVGVEACLAKEKELAAAKK</sequence>
<accession>P51544</accession>
<reference key="1">
    <citation type="journal article" date="1994" name="J. Mol. Biol.">
        <title>Evolution of phosphagen kinase. Primary structure of glycocyamine kinase and arginine kinase from invertebrates.</title>
        <authorList>
            <person name="Suzuki T."/>
            <person name="Furukohri T."/>
        </authorList>
    </citation>
    <scope>NUCLEOTIDE SEQUENCE [MRNA]</scope>
    <source>
        <tissue>Muscle</tissue>
    </source>
</reference>